<gene>
    <name type="primary">DIT1</name>
    <name type="ordered locus">At5g12860</name>
    <name type="ORF">T24H18.30</name>
</gene>
<keyword id="KW-0025">Alternative splicing</keyword>
<keyword id="KW-0150">Chloroplast</keyword>
<keyword id="KW-0472">Membrane</keyword>
<keyword id="KW-0934">Plastid</keyword>
<keyword id="KW-1001">Plastid inner membrane</keyword>
<keyword id="KW-1185">Reference proteome</keyword>
<keyword id="KW-0809">Transit peptide</keyword>
<keyword id="KW-0812">Transmembrane</keyword>
<keyword id="KW-1133">Transmembrane helix</keyword>
<keyword id="KW-0813">Transport</keyword>
<comment type="function">
    <text evidence="2 4">2-oxoglutarate/malate translocator involved with DIT2-1 in primary ammonia assimilation and in the re-assimilation of ammonia generated by the photorespiratory pathway. Imports 2-oxoglutarate into plastids as precursor for ammonia assimilation. 2-oxoglutarate is converted to glutamate, the end product of ammonia assimilation, which is exported to the cytosol by DIT2-1.</text>
</comment>
<comment type="biophysicochemical properties">
    <kinetics>
        <KM evidence="2">0.7 mM for malate</KM>
        <KM evidence="2">0.042 mM for oxaloacetate</KM>
    </kinetics>
</comment>
<comment type="subcellular location">
    <subcellularLocation>
        <location evidence="5">Plastid</location>
        <location evidence="5">Chloroplast inner membrane</location>
        <topology evidence="5">Multi-pass membrane protein</topology>
    </subcellularLocation>
</comment>
<comment type="alternative products">
    <event type="alternative splicing"/>
    <isoform>
        <id>Q9LXV3-1</id>
        <name>1</name>
        <sequence type="displayed"/>
    </isoform>
    <text>A number of isoforms are produced. According to EST sequences.</text>
</comment>
<comment type="tissue specificity">
    <text evidence="2 3">Expressed in roots, rosette and cauline leaves, stems, flowers and siliques.</text>
</comment>
<comment type="induction">
    <text evidence="2">By nitrate after two days of nitrogen deprivation and re-illumination after three days of dark adaptation.</text>
</comment>
<comment type="disruption phenotype">
    <text evidence="2 4">Reduced growth and amino acid levels, but growth inhibition is prevented when mutant plants are grown under non-photorespiratory high CO(2) conditions.</text>
</comment>
<comment type="similarity">
    <text evidence="5">Belongs to the SLC13A/DASS transporter (TC 2.A.47) family. DIT1 subfamily.</text>
</comment>
<comment type="sequence caution" evidence="5">
    <conflict type="erroneous initiation">
        <sequence resource="EMBL-CDS" id="AAK43871"/>
    </conflict>
    <text>Truncated N-terminus.</text>
</comment>
<name>DIT1_ARATH</name>
<evidence type="ECO:0000255" key="1"/>
<evidence type="ECO:0000269" key="2">
    <source>
    </source>
</evidence>
<evidence type="ECO:0000269" key="3">
    <source>
    </source>
</evidence>
<evidence type="ECO:0000269" key="4">
    <source>
    </source>
</evidence>
<evidence type="ECO:0000305" key="5"/>
<protein>
    <recommendedName>
        <fullName>Dicarboxylate transporter 1, chloroplastic</fullName>
    </recommendedName>
    <alternativeName>
        <fullName>2-oxoglutarate/malate translocator 1</fullName>
        <shortName>AtpOMT1</shortName>
    </alternativeName>
</protein>
<proteinExistence type="evidence at protein level"/>
<dbReference type="EMBL" id="AL353013">
    <property type="protein sequence ID" value="CAB88250.1"/>
    <property type="molecule type" value="Genomic_DNA"/>
</dbReference>
<dbReference type="EMBL" id="CP002688">
    <property type="protein sequence ID" value="AED91822.1"/>
    <property type="molecule type" value="Genomic_DNA"/>
</dbReference>
<dbReference type="EMBL" id="AF370494">
    <property type="protein sequence ID" value="AAK43871.1"/>
    <property type="status" value="ALT_INIT"/>
    <property type="molecule type" value="mRNA"/>
</dbReference>
<dbReference type="PIR" id="T49900">
    <property type="entry name" value="T49900"/>
</dbReference>
<dbReference type="RefSeq" id="NP_568283.2">
    <molecule id="Q9LXV3-1"/>
    <property type="nucleotide sequence ID" value="NM_121289.4"/>
</dbReference>
<dbReference type="SMR" id="Q9LXV3"/>
<dbReference type="BioGRID" id="16404">
    <property type="interactions" value="36"/>
</dbReference>
<dbReference type="FunCoup" id="Q9LXV3">
    <property type="interactions" value="118"/>
</dbReference>
<dbReference type="IntAct" id="Q9LXV3">
    <property type="interactions" value="36"/>
</dbReference>
<dbReference type="STRING" id="3702.Q9LXV3"/>
<dbReference type="GlyGen" id="Q9LXV3">
    <property type="glycosylation" value="1 site"/>
</dbReference>
<dbReference type="iPTMnet" id="Q9LXV3"/>
<dbReference type="SwissPalm" id="Q9LXV3"/>
<dbReference type="PaxDb" id="3702-AT5G12860.1"/>
<dbReference type="ProteomicsDB" id="222149">
    <molecule id="Q9LXV3-1"/>
</dbReference>
<dbReference type="EnsemblPlants" id="AT5G12860.1">
    <molecule id="Q9LXV3-1"/>
    <property type="protein sequence ID" value="AT5G12860.1"/>
    <property type="gene ID" value="AT5G12860"/>
</dbReference>
<dbReference type="GeneID" id="831126"/>
<dbReference type="Gramene" id="AT5G12860.1">
    <molecule id="Q9LXV3-1"/>
    <property type="protein sequence ID" value="AT5G12860.1"/>
    <property type="gene ID" value="AT5G12860"/>
</dbReference>
<dbReference type="KEGG" id="ath:AT5G12860"/>
<dbReference type="Araport" id="AT5G12860"/>
<dbReference type="TAIR" id="AT5G12860">
    <property type="gene designation" value="DIT1"/>
</dbReference>
<dbReference type="eggNOG" id="ENOG502QQ8W">
    <property type="taxonomic scope" value="Eukaryota"/>
</dbReference>
<dbReference type="HOGENOM" id="CLU_005170_7_3_1"/>
<dbReference type="InParanoid" id="Q9LXV3"/>
<dbReference type="OMA" id="VPLATWW"/>
<dbReference type="OrthoDB" id="1695362at2759"/>
<dbReference type="PhylomeDB" id="Q9LXV3"/>
<dbReference type="SABIO-RK" id="Q9LXV3"/>
<dbReference type="PRO" id="PR:Q9LXV3"/>
<dbReference type="Proteomes" id="UP000006548">
    <property type="component" value="Chromosome 5"/>
</dbReference>
<dbReference type="ExpressionAtlas" id="Q9LXV3">
    <property type="expression patterns" value="baseline and differential"/>
</dbReference>
<dbReference type="GO" id="GO:0009507">
    <property type="term" value="C:chloroplast"/>
    <property type="evidence" value="ECO:0007005"/>
    <property type="project" value="TAIR"/>
</dbReference>
<dbReference type="GO" id="GO:0009941">
    <property type="term" value="C:chloroplast envelope"/>
    <property type="evidence" value="ECO:0007005"/>
    <property type="project" value="TAIR"/>
</dbReference>
<dbReference type="GO" id="GO:0009706">
    <property type="term" value="C:chloroplast inner membrane"/>
    <property type="evidence" value="ECO:0007669"/>
    <property type="project" value="UniProtKB-SubCell"/>
</dbReference>
<dbReference type="GO" id="GO:0009534">
    <property type="term" value="C:chloroplast thylakoid"/>
    <property type="evidence" value="ECO:0007005"/>
    <property type="project" value="TAIR"/>
</dbReference>
<dbReference type="GO" id="GO:0009536">
    <property type="term" value="C:plastid"/>
    <property type="evidence" value="ECO:0007005"/>
    <property type="project" value="TAIR"/>
</dbReference>
<dbReference type="GO" id="GO:0015139">
    <property type="term" value="F:alpha-ketoglutarate transmembrane transporter activity"/>
    <property type="evidence" value="ECO:0000314"/>
    <property type="project" value="UniProtKB"/>
</dbReference>
<dbReference type="GO" id="GO:0015140">
    <property type="term" value="F:malate transmembrane transporter activity"/>
    <property type="evidence" value="ECO:0000314"/>
    <property type="project" value="UniProtKB"/>
</dbReference>
<dbReference type="GO" id="GO:0015131">
    <property type="term" value="F:oxaloacetate transmembrane transporter activity"/>
    <property type="evidence" value="ECO:0000314"/>
    <property type="project" value="UniProtKB"/>
</dbReference>
<dbReference type="GO" id="GO:0015742">
    <property type="term" value="P:alpha-ketoglutarate transport"/>
    <property type="evidence" value="ECO:0000314"/>
    <property type="project" value="UniProtKB"/>
</dbReference>
<dbReference type="GO" id="GO:0019676">
    <property type="term" value="P:ammonia assimilation cycle"/>
    <property type="evidence" value="ECO:0000315"/>
    <property type="project" value="UniProtKB"/>
</dbReference>
<dbReference type="GO" id="GO:0071423">
    <property type="term" value="P:malate transmembrane transport"/>
    <property type="evidence" value="ECO:0000314"/>
    <property type="project" value="UniProtKB"/>
</dbReference>
<dbReference type="GO" id="GO:0015729">
    <property type="term" value="P:oxaloacetate transport"/>
    <property type="evidence" value="ECO:0000314"/>
    <property type="project" value="UniProtKB"/>
</dbReference>
<dbReference type="GO" id="GO:0009624">
    <property type="term" value="P:response to nematode"/>
    <property type="evidence" value="ECO:0007007"/>
    <property type="project" value="TAIR"/>
</dbReference>
<dbReference type="CDD" id="cd00625">
    <property type="entry name" value="ArsB_NhaD_permease"/>
    <property type="match status" value="1"/>
</dbReference>
<dbReference type="InterPro" id="IPR030676">
    <property type="entry name" value="CitT-rel"/>
</dbReference>
<dbReference type="InterPro" id="IPR001898">
    <property type="entry name" value="SLC13A/DASS"/>
</dbReference>
<dbReference type="NCBIfam" id="TIGR00785">
    <property type="entry name" value="dass"/>
    <property type="match status" value="1"/>
</dbReference>
<dbReference type="PANTHER" id="PTHR42826">
    <property type="entry name" value="DICARBOXYLATE TRANSPORTER 2.1, CHLOROPLASTIC"/>
    <property type="match status" value="1"/>
</dbReference>
<dbReference type="Pfam" id="PF00939">
    <property type="entry name" value="Na_sulph_symp"/>
    <property type="match status" value="1"/>
</dbReference>
<organism>
    <name type="scientific">Arabidopsis thaliana</name>
    <name type="common">Mouse-ear cress</name>
    <dbReference type="NCBI Taxonomy" id="3702"/>
    <lineage>
        <taxon>Eukaryota</taxon>
        <taxon>Viridiplantae</taxon>
        <taxon>Streptophyta</taxon>
        <taxon>Embryophyta</taxon>
        <taxon>Tracheophyta</taxon>
        <taxon>Spermatophyta</taxon>
        <taxon>Magnoliopsida</taxon>
        <taxon>eudicotyledons</taxon>
        <taxon>Gunneridae</taxon>
        <taxon>Pentapetalae</taxon>
        <taxon>rosids</taxon>
        <taxon>malvids</taxon>
        <taxon>Brassicales</taxon>
        <taxon>Brassicaceae</taxon>
        <taxon>Camelineae</taxon>
        <taxon>Arabidopsis</taxon>
    </lineage>
</organism>
<reference key="1">
    <citation type="journal article" date="2000" name="Nature">
        <title>Sequence and analysis of chromosome 5 of the plant Arabidopsis thaliana.</title>
        <authorList>
            <person name="Tabata S."/>
            <person name="Kaneko T."/>
            <person name="Nakamura Y."/>
            <person name="Kotani H."/>
            <person name="Kato T."/>
            <person name="Asamizu E."/>
            <person name="Miyajima N."/>
            <person name="Sasamoto S."/>
            <person name="Kimura T."/>
            <person name="Hosouchi T."/>
            <person name="Kawashima K."/>
            <person name="Kohara M."/>
            <person name="Matsumoto M."/>
            <person name="Matsuno A."/>
            <person name="Muraki A."/>
            <person name="Nakayama S."/>
            <person name="Nakazaki N."/>
            <person name="Naruo K."/>
            <person name="Okumura S."/>
            <person name="Shinpo S."/>
            <person name="Takeuchi C."/>
            <person name="Wada T."/>
            <person name="Watanabe A."/>
            <person name="Yamada M."/>
            <person name="Yasuda M."/>
            <person name="Sato S."/>
            <person name="de la Bastide M."/>
            <person name="Huang E."/>
            <person name="Spiegel L."/>
            <person name="Gnoj L."/>
            <person name="O'Shaughnessy A."/>
            <person name="Preston R."/>
            <person name="Habermann K."/>
            <person name="Murray J."/>
            <person name="Johnson D."/>
            <person name="Rohlfing T."/>
            <person name="Nelson J."/>
            <person name="Stoneking T."/>
            <person name="Pepin K."/>
            <person name="Spieth J."/>
            <person name="Sekhon M."/>
            <person name="Armstrong J."/>
            <person name="Becker M."/>
            <person name="Belter E."/>
            <person name="Cordum H."/>
            <person name="Cordes M."/>
            <person name="Courtney L."/>
            <person name="Courtney W."/>
            <person name="Dante M."/>
            <person name="Du H."/>
            <person name="Edwards J."/>
            <person name="Fryman J."/>
            <person name="Haakensen B."/>
            <person name="Lamar E."/>
            <person name="Latreille P."/>
            <person name="Leonard S."/>
            <person name="Meyer R."/>
            <person name="Mulvaney E."/>
            <person name="Ozersky P."/>
            <person name="Riley A."/>
            <person name="Strowmatt C."/>
            <person name="Wagner-McPherson C."/>
            <person name="Wollam A."/>
            <person name="Yoakum M."/>
            <person name="Bell M."/>
            <person name="Dedhia N."/>
            <person name="Parnell L."/>
            <person name="Shah R."/>
            <person name="Rodriguez M."/>
            <person name="Hoon See L."/>
            <person name="Vil D."/>
            <person name="Baker J."/>
            <person name="Kirchoff K."/>
            <person name="Toth K."/>
            <person name="King L."/>
            <person name="Bahret A."/>
            <person name="Miller B."/>
            <person name="Marra M.A."/>
            <person name="Martienssen R."/>
            <person name="McCombie W.R."/>
            <person name="Wilson R.K."/>
            <person name="Murphy G."/>
            <person name="Bancroft I."/>
            <person name="Volckaert G."/>
            <person name="Wambutt R."/>
            <person name="Duesterhoeft A."/>
            <person name="Stiekema W."/>
            <person name="Pohl T."/>
            <person name="Entian K.-D."/>
            <person name="Terryn N."/>
            <person name="Hartley N."/>
            <person name="Bent E."/>
            <person name="Johnson S."/>
            <person name="Langham S.-A."/>
            <person name="McCullagh B."/>
            <person name="Robben J."/>
            <person name="Grymonprez B."/>
            <person name="Zimmermann W."/>
            <person name="Ramsperger U."/>
            <person name="Wedler H."/>
            <person name="Balke K."/>
            <person name="Wedler E."/>
            <person name="Peters S."/>
            <person name="van Staveren M."/>
            <person name="Dirkse W."/>
            <person name="Mooijman P."/>
            <person name="Klein Lankhorst R."/>
            <person name="Weitzenegger T."/>
            <person name="Bothe G."/>
            <person name="Rose M."/>
            <person name="Hauf J."/>
            <person name="Berneiser S."/>
            <person name="Hempel S."/>
            <person name="Feldpausch M."/>
            <person name="Lamberth S."/>
            <person name="Villarroel R."/>
            <person name="Gielen J."/>
            <person name="Ardiles W."/>
            <person name="Bents O."/>
            <person name="Lemcke K."/>
            <person name="Kolesov G."/>
            <person name="Mayer K.F.X."/>
            <person name="Rudd S."/>
            <person name="Schoof H."/>
            <person name="Schueller C."/>
            <person name="Zaccaria P."/>
            <person name="Mewes H.-W."/>
            <person name="Bevan M."/>
            <person name="Fransz P.F."/>
        </authorList>
    </citation>
    <scope>NUCLEOTIDE SEQUENCE [LARGE SCALE GENOMIC DNA]</scope>
    <source>
        <strain>cv. Columbia</strain>
    </source>
</reference>
<reference key="2">
    <citation type="journal article" date="2017" name="Plant J.">
        <title>Araport11: a complete reannotation of the Arabidopsis thaliana reference genome.</title>
        <authorList>
            <person name="Cheng C.Y."/>
            <person name="Krishnakumar V."/>
            <person name="Chan A.P."/>
            <person name="Thibaud-Nissen F."/>
            <person name="Schobel S."/>
            <person name="Town C.D."/>
        </authorList>
    </citation>
    <scope>GENOME REANNOTATION</scope>
    <source>
        <strain>cv. Columbia</strain>
    </source>
</reference>
<reference key="3">
    <citation type="journal article" date="2003" name="Science">
        <title>Empirical analysis of transcriptional activity in the Arabidopsis genome.</title>
        <authorList>
            <person name="Yamada K."/>
            <person name="Lim J."/>
            <person name="Dale J.M."/>
            <person name="Chen H."/>
            <person name="Shinn P."/>
            <person name="Palm C.J."/>
            <person name="Southwick A.M."/>
            <person name="Wu H.C."/>
            <person name="Kim C.J."/>
            <person name="Nguyen M."/>
            <person name="Pham P.K."/>
            <person name="Cheuk R.F."/>
            <person name="Karlin-Newmann G."/>
            <person name="Liu S.X."/>
            <person name="Lam B."/>
            <person name="Sakano H."/>
            <person name="Wu T."/>
            <person name="Yu G."/>
            <person name="Miranda M."/>
            <person name="Quach H.L."/>
            <person name="Tripp M."/>
            <person name="Chang C.H."/>
            <person name="Lee J.M."/>
            <person name="Toriumi M.J."/>
            <person name="Chan M.M."/>
            <person name="Tang C.C."/>
            <person name="Onodera C.S."/>
            <person name="Deng J.M."/>
            <person name="Akiyama K."/>
            <person name="Ansari Y."/>
            <person name="Arakawa T."/>
            <person name="Banh J."/>
            <person name="Banno F."/>
            <person name="Bowser L."/>
            <person name="Brooks S.Y."/>
            <person name="Carninci P."/>
            <person name="Chao Q."/>
            <person name="Choy N."/>
            <person name="Enju A."/>
            <person name="Goldsmith A.D."/>
            <person name="Gurjal M."/>
            <person name="Hansen N.F."/>
            <person name="Hayashizaki Y."/>
            <person name="Johnson-Hopson C."/>
            <person name="Hsuan V.W."/>
            <person name="Iida K."/>
            <person name="Karnes M."/>
            <person name="Khan S."/>
            <person name="Koesema E."/>
            <person name="Ishida J."/>
            <person name="Jiang P.X."/>
            <person name="Jones T."/>
            <person name="Kawai J."/>
            <person name="Kamiya A."/>
            <person name="Meyers C."/>
            <person name="Nakajima M."/>
            <person name="Narusaka M."/>
            <person name="Seki M."/>
            <person name="Sakurai T."/>
            <person name="Satou M."/>
            <person name="Tamse R."/>
            <person name="Vaysberg M."/>
            <person name="Wallender E.K."/>
            <person name="Wong C."/>
            <person name="Yamamura Y."/>
            <person name="Yuan S."/>
            <person name="Shinozaki K."/>
            <person name="Davis R.W."/>
            <person name="Theologis A."/>
            <person name="Ecker J.R."/>
        </authorList>
    </citation>
    <scope>NUCLEOTIDE SEQUENCE [LARGE SCALE MRNA] OF 17-557</scope>
    <source>
        <strain>cv. Columbia</strain>
    </source>
</reference>
<reference key="4">
    <citation type="journal article" date="2002" name="Plant Cell Physiol.">
        <title>Identifying and characterizing plastidic 2-oxoglutarate/malate and dicarboxylate transporters in Arabidopsis thaliana.</title>
        <authorList>
            <person name="Taniguchi M."/>
            <person name="Taniguchi Y."/>
            <person name="Kawasaki M."/>
            <person name="Takeda S."/>
            <person name="Kato T."/>
            <person name="Sato S."/>
            <person name="Tabata S."/>
            <person name="Miyake H."/>
            <person name="Sugiyama T."/>
        </authorList>
    </citation>
    <scope>FUNCTION</scope>
    <scope>BIOPHYSICOCHEMICAL PROPERTIES</scope>
    <scope>TISSUE SPECIFICITY</scope>
    <scope>INDUCTION</scope>
    <scope>DISRUPTION PHENOTYPE</scope>
</reference>
<reference key="5">
    <citation type="journal article" date="2003" name="Plant J.">
        <title>The Arabidopsis mutant dct is deficient in the plastidic glutamate/malate translocator DiT2.</title>
        <authorList>
            <person name="Renne P."/>
            <person name="Dressen U."/>
            <person name="Hebbeker U."/>
            <person name="Hille D."/>
            <person name="Flugge U.I."/>
            <person name="Westhoff P."/>
            <person name="Weber A.P."/>
        </authorList>
    </citation>
    <scope>TISSUE SPECIFICITY</scope>
</reference>
<reference key="6">
    <citation type="journal article" date="2011" name="Plant J.">
        <title>The chloroplastic 2-oxoglutarate/malate transporter has dual function as the malate valve and in carbon/nitrogen metabolism.</title>
        <authorList>
            <person name="Kinoshita H."/>
            <person name="Nagasaki J."/>
            <person name="Yoshikawa N."/>
            <person name="Yamamoto A."/>
            <person name="Takito S."/>
            <person name="Kawasaki M."/>
            <person name="Sugiyama T."/>
            <person name="Miyake H."/>
            <person name="Weber A.P."/>
            <person name="Taniguchi M."/>
        </authorList>
    </citation>
    <scope>FUNCTION</scope>
    <scope>DISRUPTION PHENOTYPE</scope>
</reference>
<accession>Q9LXV3</accession>
<accession>Q93Y83</accession>
<feature type="transit peptide" description="Chloroplast" evidence="1">
    <location>
        <begin position="1"/>
        <end position="69"/>
    </location>
</feature>
<feature type="chain" id="PRO_0000419183" description="Dicarboxylate transporter 1, chloroplastic">
    <location>
        <begin position="70"/>
        <end position="557"/>
    </location>
</feature>
<feature type="transmembrane region" description="Helical" evidence="1">
    <location>
        <begin position="90"/>
        <end position="110"/>
    </location>
</feature>
<feature type="transmembrane region" description="Helical" evidence="1">
    <location>
        <begin position="122"/>
        <end position="142"/>
    </location>
</feature>
<feature type="transmembrane region" description="Helical" evidence="1">
    <location>
        <begin position="158"/>
        <end position="178"/>
    </location>
</feature>
<feature type="transmembrane region" description="Helical" evidence="1">
    <location>
        <begin position="229"/>
        <end position="249"/>
    </location>
</feature>
<feature type="transmembrane region" description="Helical" evidence="1">
    <location>
        <begin position="256"/>
        <end position="276"/>
    </location>
</feature>
<feature type="transmembrane region" description="Helical" evidence="1">
    <location>
        <begin position="305"/>
        <end position="325"/>
    </location>
</feature>
<feature type="transmembrane region" description="Helical" evidence="1">
    <location>
        <begin position="355"/>
        <end position="375"/>
    </location>
</feature>
<feature type="transmembrane region" description="Helical" evidence="1">
    <location>
        <begin position="376"/>
        <end position="396"/>
    </location>
</feature>
<feature type="transmembrane region" description="Helical" evidence="1">
    <location>
        <begin position="411"/>
        <end position="431"/>
    </location>
</feature>
<feature type="transmembrane region" description="Helical" evidence="1">
    <location>
        <begin position="438"/>
        <end position="458"/>
    </location>
</feature>
<feature type="transmembrane region" description="Helical" evidence="1">
    <location>
        <begin position="477"/>
        <end position="497"/>
    </location>
</feature>
<feature type="transmembrane region" description="Helical" evidence="1">
    <location>
        <begin position="531"/>
        <end position="551"/>
    </location>
</feature>
<feature type="sequence conflict" description="In Ref. 3; AAK43871." evidence="5" ref="3">
    <original>L</original>
    <variation>H</variation>
    <location>
        <position position="496"/>
    </location>
</feature>
<sequence length="557" mass="59213">MASLALSGSCSLAFPLKSRSLSLPRPPSSSLNLTKPLRSLDSRFSLLKSPLPVSLRRRSSTLVKASSTVASASSSPTPPLVPAPVPWQGAAIKPLLASIATGLILWFVPVPEGVTRNAWQLLAIFLATIVGIITQPLPLGAVALMGLGASVLTKTLTFAAAFSAFGDPIPWLIALAFFFARGFIKTGLGNRVAYQFVRLFGSSSLGLGYSLVFSEALLAPAIPSVSARAGGIFLPLVKSLCVACGSNVGDGTEHRLGSWLMLTCFQTSVISSSMFLTAMAANPLSANLAFNTIKQTIGWTDWAKAAIVPGLVSLIVVPFLLYLIYPPTVKSSPDAPKLAQEKLDKMGPMSKNELIMAATLFLTVGLWIFGAKLGVDAVTAAILGLSVLLVTGVVTWKECLAESVAWDTLTWFAALIAMAGYLNKYGLIEWFSQTVVKFVGGLGLSWQLSFGILVLLYFYTHYFFASGAAHIGAMFTAFLSVSTALGTPPYFAALVLAFLSNLMGGLTHYGIGSAPIFYGANYVPLAKWWGYGFLISIVNILIWLGVGGAWWKFIGLW</sequence>